<proteinExistence type="inferred from homology"/>
<keyword id="KW-0378">Hydrolase</keyword>
<keyword id="KW-0460">Magnesium</keyword>
<keyword id="KW-0479">Metal-binding</keyword>
<keyword id="KW-0546">Nucleotide metabolism</keyword>
<accession>C0ZYU5</accession>
<protein>
    <recommendedName>
        <fullName evidence="1">Deoxyuridine 5'-triphosphate nucleotidohydrolase</fullName>
        <shortName evidence="1">dUTPase</shortName>
        <ecNumber evidence="1">3.6.1.23</ecNumber>
    </recommendedName>
    <alternativeName>
        <fullName evidence="1">dUTP pyrophosphatase</fullName>
    </alternativeName>
</protein>
<gene>
    <name evidence="1" type="primary">dut</name>
    <name type="ordered locus">RER_28220</name>
</gene>
<sequence>MSDHLSIALKRLDPDLPVPQRAHPGDAGVDLCSTSDVTIEPGHRTLVGTGIAIALPVGTVGLIHPRSGLAAKSGLSIVNAPGTVDAGYRGELKVCLINLDPATAIDIRRGDRIAQLVVQRVELPVFEEVESLDDTTRGTGGYGSSGGHAILDTDAPGAVVGEGV</sequence>
<organism>
    <name type="scientific">Rhodococcus erythropolis (strain PR4 / NBRC 100887)</name>
    <dbReference type="NCBI Taxonomy" id="234621"/>
    <lineage>
        <taxon>Bacteria</taxon>
        <taxon>Bacillati</taxon>
        <taxon>Actinomycetota</taxon>
        <taxon>Actinomycetes</taxon>
        <taxon>Mycobacteriales</taxon>
        <taxon>Nocardiaceae</taxon>
        <taxon>Rhodococcus</taxon>
        <taxon>Rhodococcus erythropolis group</taxon>
    </lineage>
</organism>
<dbReference type="EC" id="3.6.1.23" evidence="1"/>
<dbReference type="EMBL" id="AP008957">
    <property type="protein sequence ID" value="BAH33530.1"/>
    <property type="molecule type" value="Genomic_DNA"/>
</dbReference>
<dbReference type="RefSeq" id="WP_003942635.1">
    <property type="nucleotide sequence ID" value="NC_012490.1"/>
</dbReference>
<dbReference type="SMR" id="C0ZYU5"/>
<dbReference type="GeneID" id="93804278"/>
<dbReference type="KEGG" id="rer:RER_28220"/>
<dbReference type="eggNOG" id="COG0756">
    <property type="taxonomic scope" value="Bacteria"/>
</dbReference>
<dbReference type="HOGENOM" id="CLU_068508_1_3_11"/>
<dbReference type="UniPathway" id="UPA00610">
    <property type="reaction ID" value="UER00666"/>
</dbReference>
<dbReference type="Proteomes" id="UP000002204">
    <property type="component" value="Chromosome"/>
</dbReference>
<dbReference type="GO" id="GO:0004170">
    <property type="term" value="F:dUTP diphosphatase activity"/>
    <property type="evidence" value="ECO:0007669"/>
    <property type="project" value="UniProtKB-UniRule"/>
</dbReference>
<dbReference type="GO" id="GO:0000287">
    <property type="term" value="F:magnesium ion binding"/>
    <property type="evidence" value="ECO:0007669"/>
    <property type="project" value="UniProtKB-UniRule"/>
</dbReference>
<dbReference type="GO" id="GO:0006226">
    <property type="term" value="P:dUMP biosynthetic process"/>
    <property type="evidence" value="ECO:0007669"/>
    <property type="project" value="UniProtKB-UniRule"/>
</dbReference>
<dbReference type="GO" id="GO:0046081">
    <property type="term" value="P:dUTP catabolic process"/>
    <property type="evidence" value="ECO:0007669"/>
    <property type="project" value="InterPro"/>
</dbReference>
<dbReference type="CDD" id="cd07557">
    <property type="entry name" value="trimeric_dUTPase"/>
    <property type="match status" value="1"/>
</dbReference>
<dbReference type="FunFam" id="2.70.40.10:FF:000008">
    <property type="entry name" value="Deoxyuridine 5'-triphosphate nucleotidohydrolase"/>
    <property type="match status" value="1"/>
</dbReference>
<dbReference type="Gene3D" id="2.70.40.10">
    <property type="match status" value="1"/>
</dbReference>
<dbReference type="HAMAP" id="MF_00116">
    <property type="entry name" value="dUTPase_bact"/>
    <property type="match status" value="1"/>
</dbReference>
<dbReference type="InterPro" id="IPR008181">
    <property type="entry name" value="dUTPase"/>
</dbReference>
<dbReference type="InterPro" id="IPR029054">
    <property type="entry name" value="dUTPase-like"/>
</dbReference>
<dbReference type="InterPro" id="IPR036157">
    <property type="entry name" value="dUTPase-like_sf"/>
</dbReference>
<dbReference type="InterPro" id="IPR033704">
    <property type="entry name" value="dUTPase_trimeric"/>
</dbReference>
<dbReference type="NCBIfam" id="TIGR00576">
    <property type="entry name" value="dut"/>
    <property type="match status" value="1"/>
</dbReference>
<dbReference type="NCBIfam" id="NF001862">
    <property type="entry name" value="PRK00601.1"/>
    <property type="match status" value="1"/>
</dbReference>
<dbReference type="PANTHER" id="PTHR11241">
    <property type="entry name" value="DEOXYURIDINE 5'-TRIPHOSPHATE NUCLEOTIDOHYDROLASE"/>
    <property type="match status" value="1"/>
</dbReference>
<dbReference type="PANTHER" id="PTHR11241:SF0">
    <property type="entry name" value="DEOXYURIDINE 5'-TRIPHOSPHATE NUCLEOTIDOHYDROLASE"/>
    <property type="match status" value="1"/>
</dbReference>
<dbReference type="Pfam" id="PF00692">
    <property type="entry name" value="dUTPase"/>
    <property type="match status" value="1"/>
</dbReference>
<dbReference type="SUPFAM" id="SSF51283">
    <property type="entry name" value="dUTPase-like"/>
    <property type="match status" value="1"/>
</dbReference>
<feature type="chain" id="PRO_1000202988" description="Deoxyuridine 5'-triphosphate nucleotidohydrolase">
    <location>
        <begin position="1"/>
        <end position="164"/>
    </location>
</feature>
<feature type="binding site" evidence="1">
    <location>
        <begin position="66"/>
        <end position="68"/>
    </location>
    <ligand>
        <name>substrate</name>
    </ligand>
</feature>
<feature type="binding site" evidence="1">
    <location>
        <position position="79"/>
    </location>
    <ligand>
        <name>substrate</name>
    </ligand>
</feature>
<feature type="binding site" evidence="1">
    <location>
        <begin position="83"/>
        <end position="85"/>
    </location>
    <ligand>
        <name>substrate</name>
    </ligand>
</feature>
<feature type="binding site" evidence="1">
    <location>
        <position position="93"/>
    </location>
    <ligand>
        <name>substrate</name>
    </ligand>
</feature>
<evidence type="ECO:0000255" key="1">
    <source>
        <dbReference type="HAMAP-Rule" id="MF_00116"/>
    </source>
</evidence>
<comment type="function">
    <text evidence="1">This enzyme is involved in nucleotide metabolism: it produces dUMP, the immediate precursor of thymidine nucleotides and it decreases the intracellular concentration of dUTP so that uracil cannot be incorporated into DNA.</text>
</comment>
<comment type="catalytic activity">
    <reaction evidence="1">
        <text>dUTP + H2O = dUMP + diphosphate + H(+)</text>
        <dbReference type="Rhea" id="RHEA:10248"/>
        <dbReference type="ChEBI" id="CHEBI:15377"/>
        <dbReference type="ChEBI" id="CHEBI:15378"/>
        <dbReference type="ChEBI" id="CHEBI:33019"/>
        <dbReference type="ChEBI" id="CHEBI:61555"/>
        <dbReference type="ChEBI" id="CHEBI:246422"/>
        <dbReference type="EC" id="3.6.1.23"/>
    </reaction>
</comment>
<comment type="cofactor">
    <cofactor evidence="1">
        <name>Mg(2+)</name>
        <dbReference type="ChEBI" id="CHEBI:18420"/>
    </cofactor>
</comment>
<comment type="pathway">
    <text evidence="1">Pyrimidine metabolism; dUMP biosynthesis; dUMP from dCTP (dUTP route): step 2/2.</text>
</comment>
<comment type="similarity">
    <text evidence="1">Belongs to the dUTPase family.</text>
</comment>
<name>DUT_RHOE4</name>
<reference key="1">
    <citation type="submission" date="2005-03" db="EMBL/GenBank/DDBJ databases">
        <title>Comparison of the complete genome sequences of Rhodococcus erythropolis PR4 and Rhodococcus opacus B4.</title>
        <authorList>
            <person name="Takarada H."/>
            <person name="Sekine M."/>
            <person name="Hosoyama A."/>
            <person name="Yamada R."/>
            <person name="Fujisawa T."/>
            <person name="Omata S."/>
            <person name="Shimizu A."/>
            <person name="Tsukatani N."/>
            <person name="Tanikawa S."/>
            <person name="Fujita N."/>
            <person name="Harayama S."/>
        </authorList>
    </citation>
    <scope>NUCLEOTIDE SEQUENCE [LARGE SCALE GENOMIC DNA]</scope>
    <source>
        <strain>PR4 / NBRC 100887</strain>
    </source>
</reference>